<proteinExistence type="inferred from homology"/>
<name>THIG_PSYA2</name>
<protein>
    <recommendedName>
        <fullName evidence="1">Thiazole synthase</fullName>
        <ecNumber evidence="1">2.8.1.10</ecNumber>
    </recommendedName>
</protein>
<dbReference type="EC" id="2.8.1.10" evidence="1"/>
<dbReference type="EMBL" id="CP000082">
    <property type="protein sequence ID" value="AAZ18097.1"/>
    <property type="molecule type" value="Genomic_DNA"/>
</dbReference>
<dbReference type="RefSeq" id="WP_011279535.1">
    <property type="nucleotide sequence ID" value="NC_007204.1"/>
</dbReference>
<dbReference type="SMR" id="Q4FV61"/>
<dbReference type="STRING" id="259536.Psyc_0224"/>
<dbReference type="KEGG" id="par:Psyc_0224"/>
<dbReference type="eggNOG" id="COG2022">
    <property type="taxonomic scope" value="Bacteria"/>
</dbReference>
<dbReference type="HOGENOM" id="CLU_062233_1_1_6"/>
<dbReference type="OrthoDB" id="9805935at2"/>
<dbReference type="UniPathway" id="UPA00060"/>
<dbReference type="Proteomes" id="UP000000546">
    <property type="component" value="Chromosome"/>
</dbReference>
<dbReference type="GO" id="GO:0005737">
    <property type="term" value="C:cytoplasm"/>
    <property type="evidence" value="ECO:0007669"/>
    <property type="project" value="UniProtKB-SubCell"/>
</dbReference>
<dbReference type="GO" id="GO:1990107">
    <property type="term" value="F:thiazole synthase activity"/>
    <property type="evidence" value="ECO:0007669"/>
    <property type="project" value="UniProtKB-EC"/>
</dbReference>
<dbReference type="GO" id="GO:0009229">
    <property type="term" value="P:thiamine diphosphate biosynthetic process"/>
    <property type="evidence" value="ECO:0007669"/>
    <property type="project" value="UniProtKB-UniRule"/>
</dbReference>
<dbReference type="CDD" id="cd04728">
    <property type="entry name" value="ThiG"/>
    <property type="match status" value="1"/>
</dbReference>
<dbReference type="Gene3D" id="3.20.20.70">
    <property type="entry name" value="Aldolase class I"/>
    <property type="match status" value="1"/>
</dbReference>
<dbReference type="HAMAP" id="MF_00443">
    <property type="entry name" value="ThiG"/>
    <property type="match status" value="1"/>
</dbReference>
<dbReference type="InterPro" id="IPR013785">
    <property type="entry name" value="Aldolase_TIM"/>
</dbReference>
<dbReference type="InterPro" id="IPR033983">
    <property type="entry name" value="Thiazole_synthase_ThiG"/>
</dbReference>
<dbReference type="InterPro" id="IPR008867">
    <property type="entry name" value="ThiG"/>
</dbReference>
<dbReference type="PANTHER" id="PTHR34266">
    <property type="entry name" value="THIAZOLE SYNTHASE"/>
    <property type="match status" value="1"/>
</dbReference>
<dbReference type="PANTHER" id="PTHR34266:SF2">
    <property type="entry name" value="THIAZOLE SYNTHASE"/>
    <property type="match status" value="1"/>
</dbReference>
<dbReference type="Pfam" id="PF05690">
    <property type="entry name" value="ThiG"/>
    <property type="match status" value="1"/>
</dbReference>
<dbReference type="SUPFAM" id="SSF110399">
    <property type="entry name" value="ThiG-like"/>
    <property type="match status" value="1"/>
</dbReference>
<accession>Q4FV61</accession>
<evidence type="ECO:0000255" key="1">
    <source>
        <dbReference type="HAMAP-Rule" id="MF_00443"/>
    </source>
</evidence>
<keyword id="KW-0963">Cytoplasm</keyword>
<keyword id="KW-1185">Reference proteome</keyword>
<keyword id="KW-0704">Schiff base</keyword>
<keyword id="KW-0784">Thiamine biosynthesis</keyword>
<keyword id="KW-0808">Transferase</keyword>
<feature type="chain" id="PRO_0000236360" description="Thiazole synthase">
    <location>
        <begin position="1"/>
        <end position="274"/>
    </location>
</feature>
<feature type="active site" description="Schiff-base intermediate with DXP" evidence="1">
    <location>
        <position position="115"/>
    </location>
</feature>
<feature type="binding site" evidence="1">
    <location>
        <position position="176"/>
    </location>
    <ligand>
        <name>1-deoxy-D-xylulose 5-phosphate</name>
        <dbReference type="ChEBI" id="CHEBI:57792"/>
    </ligand>
</feature>
<feature type="binding site" evidence="1">
    <location>
        <begin position="202"/>
        <end position="203"/>
    </location>
    <ligand>
        <name>1-deoxy-D-xylulose 5-phosphate</name>
        <dbReference type="ChEBI" id="CHEBI:57792"/>
    </ligand>
</feature>
<feature type="binding site" evidence="1">
    <location>
        <begin position="224"/>
        <end position="225"/>
    </location>
    <ligand>
        <name>1-deoxy-D-xylulose 5-phosphate</name>
        <dbReference type="ChEBI" id="CHEBI:57792"/>
    </ligand>
</feature>
<gene>
    <name evidence="1" type="primary">thiG</name>
    <name type="ordered locus">Psyc_0224</name>
</gene>
<comment type="function">
    <text evidence="1">Catalyzes the rearrangement of 1-deoxy-D-xylulose 5-phosphate (DXP) to produce the thiazole phosphate moiety of thiamine. Sulfur is provided by the thiocarboxylate moiety of the carrier protein ThiS. In vitro, sulfur can be provided by H(2)S.</text>
</comment>
<comment type="catalytic activity">
    <reaction evidence="1">
        <text>[ThiS sulfur-carrier protein]-C-terminal-Gly-aminoethanethioate + 2-iminoacetate + 1-deoxy-D-xylulose 5-phosphate = [ThiS sulfur-carrier protein]-C-terminal Gly-Gly + 2-[(2R,5Z)-2-carboxy-4-methylthiazol-5(2H)-ylidene]ethyl phosphate + 2 H2O + H(+)</text>
        <dbReference type="Rhea" id="RHEA:26297"/>
        <dbReference type="Rhea" id="RHEA-COMP:12909"/>
        <dbReference type="Rhea" id="RHEA-COMP:19908"/>
        <dbReference type="ChEBI" id="CHEBI:15377"/>
        <dbReference type="ChEBI" id="CHEBI:15378"/>
        <dbReference type="ChEBI" id="CHEBI:57792"/>
        <dbReference type="ChEBI" id="CHEBI:62899"/>
        <dbReference type="ChEBI" id="CHEBI:77846"/>
        <dbReference type="ChEBI" id="CHEBI:90778"/>
        <dbReference type="ChEBI" id="CHEBI:232372"/>
        <dbReference type="EC" id="2.8.1.10"/>
    </reaction>
</comment>
<comment type="pathway">
    <text evidence="1">Cofactor biosynthesis; thiamine diphosphate biosynthesis.</text>
</comment>
<comment type="subunit">
    <text evidence="1">Homotetramer. Forms heterodimers with either ThiH or ThiS.</text>
</comment>
<comment type="subcellular location">
    <subcellularLocation>
        <location evidence="1">Cytoplasm</location>
    </subcellularLocation>
</comment>
<comment type="similarity">
    <text evidence="1">Belongs to the ThiG family.</text>
</comment>
<organism>
    <name type="scientific">Psychrobacter arcticus (strain DSM 17307 / VKM B-2377 / 273-4)</name>
    <dbReference type="NCBI Taxonomy" id="259536"/>
    <lineage>
        <taxon>Bacteria</taxon>
        <taxon>Pseudomonadati</taxon>
        <taxon>Pseudomonadota</taxon>
        <taxon>Gammaproteobacteria</taxon>
        <taxon>Moraxellales</taxon>
        <taxon>Moraxellaceae</taxon>
        <taxon>Psychrobacter</taxon>
    </lineage>
</organism>
<sequence>MSENTSTATQPTPLLQDTFTVGSRTFSSRLLVGTGKYKDMTETGAAIGASAAEIVTVAIRRTNIGQNSNEPNLLDVISPDKYTILPNTAGCFDAETAIRTCKLARELLGGHNLVKLEVLGDEKTLYPNVMETLKAAKVLIDDGFEVMVYTSDDPIVAQELESMGCVAIMPLGSLIGSGLGLINRHTLSLIIENTKVPVLVDAGVGTASDAAIAMELGCDGVLMNSAIANAKNPVMMAQAMKHAVWAGRQAFLAGRMPMRKMATASSPQTGYFFQ</sequence>
<reference key="1">
    <citation type="journal article" date="2010" name="Appl. Environ. Microbiol.">
        <title>The genome sequence of Psychrobacter arcticus 273-4, a psychroactive Siberian permafrost bacterium, reveals mechanisms for adaptation to low-temperature growth.</title>
        <authorList>
            <person name="Ayala-del-Rio H.L."/>
            <person name="Chain P.S."/>
            <person name="Grzymski J.J."/>
            <person name="Ponder M.A."/>
            <person name="Ivanova N."/>
            <person name="Bergholz P.W."/>
            <person name="Di Bartolo G."/>
            <person name="Hauser L."/>
            <person name="Land M."/>
            <person name="Bakermans C."/>
            <person name="Rodrigues D."/>
            <person name="Klappenbach J."/>
            <person name="Zarka D."/>
            <person name="Larimer F."/>
            <person name="Richardson P."/>
            <person name="Murray A."/>
            <person name="Thomashow M."/>
            <person name="Tiedje J.M."/>
        </authorList>
    </citation>
    <scope>NUCLEOTIDE SEQUENCE [LARGE SCALE GENOMIC DNA]</scope>
    <source>
        <strain>DSM 17307 / VKM B-2377 / 273-4</strain>
    </source>
</reference>